<sequence>MQAQESLTLEDVAVDFTWEEWQFLSPAQKDLYRDVMLENYSNLVAVGFQASKQDALSKLERGEETCTTEDEIYSRICFEIRKIDDPLQHHLQNRSIQKSVKQCHEQNMFGNIVNQNKGHFLLKQDRDTFDLHEKPLKSILSFENQKRSSGLKNSAEFNGDGKSLFHANHKQFYTEMKFPATAKPINKSQFIKQQRTHNIENAHVCSECGKAFLKLSQFIDHQRVHNGEKPHVCSMCGKAFSRKSRLMDHQRTHTELKHYECTECDKTFLKKSQLNIHQKTHMGEKPYTCSECGKAFIKKCRLIYHQRTHTGEKPHGCSVCGKAFSTKFSLTTHQKTHTGEKPYICSECGKGFIEKRRLIAHHRTHTGEKPFICNKCGKGFTLKNSLITHQQTHTEEKLYTCSECGKGFSMKHCLMVHQRTHTGEKPYKCNECGKGFALKSPLIRHQRTHTGEKPYVCTECRKGFTMKSDLIVHQRTHTAEKPYICNDCGKGFTVKSRLIVHQRTHTGEKPYVCGECGKGFPAKIRLMGHQRTHTGEKPYICDECGKGFTEKSHLNVHRRTHTGEKPYVCSECGKGLTGKSMLIAHQRTHTGEKPYICNECGKGFTMKSTLSIHQQTHTGEKPYKCNECDKSFRKKTCLIQHQRFHTGKTSFACTECGKFSLRKNDLITHQRIHTGEKPYKCSDCGKAFTTKSGLNVHQRKHTGERPYGCSDCGKAFAHLSILVKHKRIHR</sequence>
<accession>Q5R4K8</accession>
<accession>Q5R7F4</accession>
<accession>Q5R900</accession>
<gene>
    <name type="primary">ZNF615</name>
</gene>
<feature type="chain" id="PRO_0000311773" description="Zinc finger protein 615">
    <location>
        <begin position="1"/>
        <end position="730"/>
    </location>
</feature>
<feature type="domain" description="KRAB" evidence="2">
    <location>
        <begin position="7"/>
        <end position="78"/>
    </location>
</feature>
<feature type="zinc finger region" description="C2H2-type 1" evidence="1">
    <location>
        <begin position="203"/>
        <end position="225"/>
    </location>
</feature>
<feature type="zinc finger region" description="C2H2-type 2" evidence="1">
    <location>
        <begin position="231"/>
        <end position="253"/>
    </location>
</feature>
<feature type="zinc finger region" description="C2H2-type 3" evidence="1">
    <location>
        <begin position="259"/>
        <end position="281"/>
    </location>
</feature>
<feature type="zinc finger region" description="C2H2-type 4" evidence="1">
    <location>
        <begin position="287"/>
        <end position="309"/>
    </location>
</feature>
<feature type="zinc finger region" description="C2H2-type 5" evidence="1">
    <location>
        <begin position="315"/>
        <end position="337"/>
    </location>
</feature>
<feature type="zinc finger region" description="C2H2-type 6" evidence="1">
    <location>
        <begin position="343"/>
        <end position="365"/>
    </location>
</feature>
<feature type="zinc finger region" description="C2H2-type 7" evidence="1">
    <location>
        <begin position="371"/>
        <end position="393"/>
    </location>
</feature>
<feature type="zinc finger region" description="C2H2-type 8" evidence="1">
    <location>
        <begin position="399"/>
        <end position="421"/>
    </location>
</feature>
<feature type="zinc finger region" description="C2H2-type 9" evidence="1">
    <location>
        <begin position="427"/>
        <end position="449"/>
    </location>
</feature>
<feature type="zinc finger region" description="C2H2-type 10" evidence="1">
    <location>
        <begin position="455"/>
        <end position="477"/>
    </location>
</feature>
<feature type="zinc finger region" description="C2H2-type 11" evidence="1">
    <location>
        <begin position="483"/>
        <end position="505"/>
    </location>
</feature>
<feature type="zinc finger region" description="C2H2-type 12" evidence="1">
    <location>
        <begin position="511"/>
        <end position="533"/>
    </location>
</feature>
<feature type="zinc finger region" description="C2H2-type 13" evidence="1">
    <location>
        <begin position="539"/>
        <end position="561"/>
    </location>
</feature>
<feature type="zinc finger region" description="C2H2-type 14" evidence="1">
    <location>
        <begin position="567"/>
        <end position="589"/>
    </location>
</feature>
<feature type="zinc finger region" description="C2H2-type 15" evidence="1">
    <location>
        <begin position="595"/>
        <end position="617"/>
    </location>
</feature>
<feature type="zinc finger region" description="C2H2-type 16" evidence="1">
    <location>
        <begin position="623"/>
        <end position="645"/>
    </location>
</feature>
<feature type="zinc finger region" description="C2H2-type 17" evidence="1">
    <location>
        <begin position="651"/>
        <end position="673"/>
    </location>
</feature>
<feature type="zinc finger region" description="C2H2-type 18" evidence="1">
    <location>
        <begin position="679"/>
        <end position="701"/>
    </location>
</feature>
<feature type="zinc finger region" description="C2H2-type 19" evidence="1">
    <location>
        <begin position="707"/>
        <end position="729"/>
    </location>
</feature>
<feature type="sequence conflict" description="In Ref. 1; CAH92306." evidence="3" ref="1">
    <original>T</original>
    <variation>I</variation>
    <location>
        <position position="181"/>
    </location>
</feature>
<feature type="sequence conflict" description="In Ref. 1; CAH92306." evidence="3" ref="1">
    <original>R</original>
    <variation>G</variation>
    <location>
        <position position="245"/>
    </location>
</feature>
<feature type="sequence conflict" description="In Ref. 1; CAH93308." evidence="3" ref="1">
    <original>L</original>
    <variation>P</variation>
    <location>
        <position position="256"/>
    </location>
</feature>
<feature type="sequence conflict" description="In Ref. 1; CAH93308." evidence="3" ref="1">
    <original>Y</original>
    <variation>C</variation>
    <location>
        <position position="343"/>
    </location>
</feature>
<feature type="sequence conflict" description="In Ref. 1; CAH92306." evidence="3" ref="1">
    <original>L</original>
    <variation>P</variation>
    <location>
        <position position="414"/>
    </location>
</feature>
<feature type="sequence conflict" description="In Ref. 1; CAH92306." evidence="3" ref="1">
    <original>E</original>
    <variation>A</variation>
    <location>
        <position position="543"/>
    </location>
</feature>
<evidence type="ECO:0000255" key="1">
    <source>
        <dbReference type="PROSITE-ProRule" id="PRU00042"/>
    </source>
</evidence>
<evidence type="ECO:0000255" key="2">
    <source>
        <dbReference type="PROSITE-ProRule" id="PRU00119"/>
    </source>
</evidence>
<evidence type="ECO:0000305" key="3"/>
<protein>
    <recommendedName>
        <fullName>Zinc finger protein 615</fullName>
    </recommendedName>
</protein>
<organism>
    <name type="scientific">Pongo abelii</name>
    <name type="common">Sumatran orangutan</name>
    <name type="synonym">Pongo pygmaeus abelii</name>
    <dbReference type="NCBI Taxonomy" id="9601"/>
    <lineage>
        <taxon>Eukaryota</taxon>
        <taxon>Metazoa</taxon>
        <taxon>Chordata</taxon>
        <taxon>Craniata</taxon>
        <taxon>Vertebrata</taxon>
        <taxon>Euteleostomi</taxon>
        <taxon>Mammalia</taxon>
        <taxon>Eutheria</taxon>
        <taxon>Euarchontoglires</taxon>
        <taxon>Primates</taxon>
        <taxon>Haplorrhini</taxon>
        <taxon>Catarrhini</taxon>
        <taxon>Hominidae</taxon>
        <taxon>Pongo</taxon>
    </lineage>
</organism>
<keyword id="KW-0238">DNA-binding</keyword>
<keyword id="KW-0479">Metal-binding</keyword>
<keyword id="KW-0539">Nucleus</keyword>
<keyword id="KW-1185">Reference proteome</keyword>
<keyword id="KW-0677">Repeat</keyword>
<keyword id="KW-0804">Transcription</keyword>
<keyword id="KW-0805">Transcription regulation</keyword>
<keyword id="KW-0862">Zinc</keyword>
<keyword id="KW-0863">Zinc-finger</keyword>
<dbReference type="EMBL" id="CR859597">
    <property type="protein sequence ID" value="CAH91760.1"/>
    <property type="molecule type" value="mRNA"/>
</dbReference>
<dbReference type="EMBL" id="CR860164">
    <property type="protein sequence ID" value="CAH92306.1"/>
    <property type="molecule type" value="mRNA"/>
</dbReference>
<dbReference type="EMBL" id="CR861238">
    <property type="protein sequence ID" value="CAH93308.1"/>
    <property type="molecule type" value="mRNA"/>
</dbReference>
<dbReference type="RefSeq" id="NP_001126350.1">
    <property type="nucleotide sequence ID" value="NM_001132878.1"/>
</dbReference>
<dbReference type="RefSeq" id="NP_001128902.1">
    <property type="nucleotide sequence ID" value="NM_001135430.1"/>
</dbReference>
<dbReference type="RefSeq" id="XP_009231255.1">
    <property type="nucleotide sequence ID" value="XM_009232980.1"/>
</dbReference>
<dbReference type="RefSeq" id="XP_009231256.1">
    <property type="nucleotide sequence ID" value="XM_009232981.1"/>
</dbReference>
<dbReference type="SMR" id="Q5R4K8"/>
<dbReference type="STRING" id="9601.ENSPPYP00000011571"/>
<dbReference type="GeneID" id="100189844"/>
<dbReference type="KEGG" id="pon:100189844"/>
<dbReference type="CTD" id="284370"/>
<dbReference type="eggNOG" id="KOG1721">
    <property type="taxonomic scope" value="Eukaryota"/>
</dbReference>
<dbReference type="HOGENOM" id="CLU_002678_17_1_1"/>
<dbReference type="InParanoid" id="Q5R4K8"/>
<dbReference type="OrthoDB" id="6591996at2759"/>
<dbReference type="TreeFam" id="TF350804"/>
<dbReference type="Proteomes" id="UP000001595">
    <property type="component" value="Chromosome 19"/>
</dbReference>
<dbReference type="GO" id="GO:0005634">
    <property type="term" value="C:nucleus"/>
    <property type="evidence" value="ECO:0007669"/>
    <property type="project" value="UniProtKB-SubCell"/>
</dbReference>
<dbReference type="GO" id="GO:0003677">
    <property type="term" value="F:DNA binding"/>
    <property type="evidence" value="ECO:0007669"/>
    <property type="project" value="UniProtKB-KW"/>
</dbReference>
<dbReference type="GO" id="GO:0008270">
    <property type="term" value="F:zinc ion binding"/>
    <property type="evidence" value="ECO:0007669"/>
    <property type="project" value="UniProtKB-KW"/>
</dbReference>
<dbReference type="GO" id="GO:0006355">
    <property type="term" value="P:regulation of DNA-templated transcription"/>
    <property type="evidence" value="ECO:0007669"/>
    <property type="project" value="InterPro"/>
</dbReference>
<dbReference type="CDD" id="cd07765">
    <property type="entry name" value="KRAB_A-box"/>
    <property type="match status" value="1"/>
</dbReference>
<dbReference type="FunFam" id="3.30.160.60:FF:000029">
    <property type="entry name" value="GLI family zinc finger 4"/>
    <property type="match status" value="2"/>
</dbReference>
<dbReference type="FunFam" id="3.30.160.60:FF:001576">
    <property type="entry name" value="HKR1, GLI-Kruppel zinc finger family member"/>
    <property type="match status" value="1"/>
</dbReference>
<dbReference type="FunFam" id="3.30.160.60:FF:002063">
    <property type="entry name" value="RB associated KRAB zinc finger"/>
    <property type="match status" value="2"/>
</dbReference>
<dbReference type="FunFam" id="3.30.160.60:FF:000478">
    <property type="entry name" value="Zinc finger protein 133"/>
    <property type="match status" value="2"/>
</dbReference>
<dbReference type="FunFam" id="3.30.160.60:FF:000638">
    <property type="entry name" value="Zinc finger protein 184"/>
    <property type="match status" value="1"/>
</dbReference>
<dbReference type="FunFam" id="3.30.160.60:FF:000006">
    <property type="entry name" value="Zinc finger protein 184 (Kruppel-like)"/>
    <property type="match status" value="2"/>
</dbReference>
<dbReference type="FunFam" id="3.30.160.60:FF:000295">
    <property type="entry name" value="zinc finger protein 19"/>
    <property type="match status" value="1"/>
</dbReference>
<dbReference type="FunFam" id="3.30.160.60:FF:000058">
    <property type="entry name" value="Zinc finger protein 2 homolog"/>
    <property type="match status" value="1"/>
</dbReference>
<dbReference type="FunFam" id="3.30.160.60:FF:000003">
    <property type="entry name" value="Zinc finger protein 3 homolog"/>
    <property type="match status" value="1"/>
</dbReference>
<dbReference type="FunFam" id="3.30.160.60:FF:002343">
    <property type="entry name" value="Zinc finger protein 33A"/>
    <property type="match status" value="2"/>
</dbReference>
<dbReference type="FunFam" id="3.30.160.60:FF:001498">
    <property type="entry name" value="Zinc finger protein 404"/>
    <property type="match status" value="1"/>
</dbReference>
<dbReference type="FunFam" id="3.30.160.60:FF:000384">
    <property type="entry name" value="Zinc finger protein 550"/>
    <property type="match status" value="1"/>
</dbReference>
<dbReference type="FunFam" id="3.30.160.60:FF:001239">
    <property type="entry name" value="Zinc finger protein 615"/>
    <property type="match status" value="1"/>
</dbReference>
<dbReference type="FunFam" id="3.30.160.60:FF:000953">
    <property type="entry name" value="Zinc finger protein 691"/>
    <property type="match status" value="1"/>
</dbReference>
<dbReference type="Gene3D" id="6.10.140.140">
    <property type="match status" value="1"/>
</dbReference>
<dbReference type="Gene3D" id="3.30.160.60">
    <property type="entry name" value="Classic Zinc Finger"/>
    <property type="match status" value="19"/>
</dbReference>
<dbReference type="InterPro" id="IPR050636">
    <property type="entry name" value="C2H2-ZF_domain-containing"/>
</dbReference>
<dbReference type="InterPro" id="IPR001909">
    <property type="entry name" value="KRAB"/>
</dbReference>
<dbReference type="InterPro" id="IPR036051">
    <property type="entry name" value="KRAB_dom_sf"/>
</dbReference>
<dbReference type="InterPro" id="IPR036236">
    <property type="entry name" value="Znf_C2H2_sf"/>
</dbReference>
<dbReference type="InterPro" id="IPR013087">
    <property type="entry name" value="Znf_C2H2_type"/>
</dbReference>
<dbReference type="PANTHER" id="PTHR47772:SF15">
    <property type="entry name" value="REDUCED EXPRESSION 2-RELATED"/>
    <property type="match status" value="1"/>
</dbReference>
<dbReference type="PANTHER" id="PTHR47772">
    <property type="entry name" value="ZINC FINGER PROTEIN 200"/>
    <property type="match status" value="1"/>
</dbReference>
<dbReference type="Pfam" id="PF01352">
    <property type="entry name" value="KRAB"/>
    <property type="match status" value="1"/>
</dbReference>
<dbReference type="Pfam" id="PF00096">
    <property type="entry name" value="zf-C2H2"/>
    <property type="match status" value="16"/>
</dbReference>
<dbReference type="SMART" id="SM00349">
    <property type="entry name" value="KRAB"/>
    <property type="match status" value="1"/>
</dbReference>
<dbReference type="SMART" id="SM00355">
    <property type="entry name" value="ZnF_C2H2"/>
    <property type="match status" value="19"/>
</dbReference>
<dbReference type="SUPFAM" id="SSF57667">
    <property type="entry name" value="beta-beta-alpha zinc fingers"/>
    <property type="match status" value="10"/>
</dbReference>
<dbReference type="SUPFAM" id="SSF109640">
    <property type="entry name" value="KRAB domain (Kruppel-associated box)"/>
    <property type="match status" value="1"/>
</dbReference>
<dbReference type="PROSITE" id="PS50805">
    <property type="entry name" value="KRAB"/>
    <property type="match status" value="1"/>
</dbReference>
<dbReference type="PROSITE" id="PS00028">
    <property type="entry name" value="ZINC_FINGER_C2H2_1"/>
    <property type="match status" value="18"/>
</dbReference>
<dbReference type="PROSITE" id="PS50157">
    <property type="entry name" value="ZINC_FINGER_C2H2_2"/>
    <property type="match status" value="19"/>
</dbReference>
<comment type="function">
    <text>May be involved in transcriptional regulation.</text>
</comment>
<comment type="subcellular location">
    <subcellularLocation>
        <location evidence="3">Nucleus</location>
    </subcellularLocation>
</comment>
<comment type="similarity">
    <text evidence="3">Belongs to the krueppel C2H2-type zinc-finger protein family.</text>
</comment>
<proteinExistence type="evidence at transcript level"/>
<name>ZN615_PONAB</name>
<reference key="1">
    <citation type="submission" date="2004-11" db="EMBL/GenBank/DDBJ databases">
        <authorList>
            <consortium name="The German cDNA consortium"/>
        </authorList>
    </citation>
    <scope>NUCLEOTIDE SEQUENCE [LARGE SCALE MRNA]</scope>
    <source>
        <tissue>Brain cortex</tissue>
    </source>
</reference>